<feature type="signal peptide" evidence="1">
    <location>
        <begin position="1"/>
        <end position="24"/>
    </location>
</feature>
<feature type="chain" id="PRO_0000416109" description="Izumo sperm-egg fusion protein 4">
    <location>
        <begin position="25"/>
        <end position="227"/>
    </location>
</feature>
<feature type="glycosylation site" description="N-linked (GlcNAc...) asparagine" evidence="1">
    <location>
        <position position="153"/>
    </location>
</feature>
<feature type="glycosylation site" description="N-linked (GlcNAc...) asparagine" evidence="1">
    <location>
        <position position="214"/>
    </location>
</feature>
<feature type="splice variant" id="VSP_042504" description="In isoform 2." evidence="2">
    <original>MFGQGRLGQAMALLLFLGMTAALARGCLQCDPNFAEKFSFYRHHVNLKSWWVGDIPVSGMLLSDWIQNTMKELHLAIPAEITRKKLYQVAEAVYQRMDQLYQGKMYFPGYFPNELRAIFREQVRLIQNAIIESRIDCQRHC</original>
    <variation>MVQAKGHSGSGPGWGGPRGVWGCFSYIA</variation>
    <location>
        <begin position="1"/>
        <end position="141"/>
    </location>
</feature>
<feature type="splice variant" id="VSP_042505" description="In isoform 2." evidence="2">
    <location>
        <begin position="195"/>
        <end position="227"/>
    </location>
</feature>
<keyword id="KW-0025">Alternative splicing</keyword>
<keyword id="KW-0325">Glycoprotein</keyword>
<keyword id="KW-1185">Reference proteome</keyword>
<keyword id="KW-0964">Secreted</keyword>
<keyword id="KW-0732">Signal</keyword>
<gene>
    <name type="primary">Izumo4</name>
</gene>
<protein>
    <recommendedName>
        <fullName>Izumo sperm-egg fusion protein 4</fullName>
    </recommendedName>
</protein>
<reference key="1">
    <citation type="journal article" date="2009" name="PLoS Biol.">
        <title>Lineage-specific biology revealed by a finished genome assembly of the mouse.</title>
        <authorList>
            <person name="Church D.M."/>
            <person name="Goodstadt L."/>
            <person name="Hillier L.W."/>
            <person name="Zody M.C."/>
            <person name="Goldstein S."/>
            <person name="She X."/>
            <person name="Bult C.J."/>
            <person name="Agarwala R."/>
            <person name="Cherry J.L."/>
            <person name="DiCuccio M."/>
            <person name="Hlavina W."/>
            <person name="Kapustin Y."/>
            <person name="Meric P."/>
            <person name="Maglott D."/>
            <person name="Birtle Z."/>
            <person name="Marques A.C."/>
            <person name="Graves T."/>
            <person name="Zhou S."/>
            <person name="Teague B."/>
            <person name="Potamousis K."/>
            <person name="Churas C."/>
            <person name="Place M."/>
            <person name="Herschleb J."/>
            <person name="Runnheim R."/>
            <person name="Forrest D."/>
            <person name="Amos-Landgraf J."/>
            <person name="Schwartz D.C."/>
            <person name="Cheng Z."/>
            <person name="Lindblad-Toh K."/>
            <person name="Eichler E.E."/>
            <person name="Ponting C.P."/>
        </authorList>
    </citation>
    <scope>NUCLEOTIDE SEQUENCE [LARGE SCALE GENOMIC DNA]</scope>
    <source>
        <strain>C57BL/6J</strain>
    </source>
</reference>
<reference key="2">
    <citation type="submission" date="2005-09" db="EMBL/GenBank/DDBJ databases">
        <authorList>
            <person name="Mural R.J."/>
            <person name="Adams M.D."/>
            <person name="Myers E.W."/>
            <person name="Smith H.O."/>
            <person name="Venter J.C."/>
        </authorList>
    </citation>
    <scope>NUCLEOTIDE SEQUENCE [LARGE SCALE GENOMIC DNA]</scope>
</reference>
<reference key="3">
    <citation type="journal article" date="2004" name="Genome Res.">
        <title>The status, quality, and expansion of the NIH full-length cDNA project: the Mammalian Gene Collection (MGC).</title>
        <authorList>
            <consortium name="The MGC Project Team"/>
        </authorList>
    </citation>
    <scope>NUCLEOTIDE SEQUENCE [LARGE SCALE MRNA] (ISOFORM 2)</scope>
    <source>
        <strain>129</strain>
        <tissue>Mammary tumor</tissue>
    </source>
</reference>
<reference key="4">
    <citation type="journal article" date="2010" name="Cell">
        <title>A tissue-specific atlas of mouse protein phosphorylation and expression.</title>
        <authorList>
            <person name="Huttlin E.L."/>
            <person name="Jedrychowski M.P."/>
            <person name="Elias J.E."/>
            <person name="Goswami T."/>
            <person name="Rad R."/>
            <person name="Beausoleil S.A."/>
            <person name="Villen J."/>
            <person name="Haas W."/>
            <person name="Sowa M.E."/>
            <person name="Gygi S.P."/>
        </authorList>
    </citation>
    <scope>IDENTIFICATION BY MASS SPECTROMETRY [LARGE SCALE ANALYSIS]</scope>
    <source>
        <tissue>Testis</tissue>
    </source>
</reference>
<accession>D3Z690</accession>
<accession>Q6PEP3</accession>
<name>IZUM4_MOUSE</name>
<evidence type="ECO:0000255" key="1"/>
<evidence type="ECO:0000303" key="2">
    <source>
    </source>
</evidence>
<evidence type="ECO:0000305" key="3"/>
<organism>
    <name type="scientific">Mus musculus</name>
    <name type="common">Mouse</name>
    <dbReference type="NCBI Taxonomy" id="10090"/>
    <lineage>
        <taxon>Eukaryota</taxon>
        <taxon>Metazoa</taxon>
        <taxon>Chordata</taxon>
        <taxon>Craniata</taxon>
        <taxon>Vertebrata</taxon>
        <taxon>Euteleostomi</taxon>
        <taxon>Mammalia</taxon>
        <taxon>Eutheria</taxon>
        <taxon>Euarchontoglires</taxon>
        <taxon>Glires</taxon>
        <taxon>Rodentia</taxon>
        <taxon>Myomorpha</taxon>
        <taxon>Muroidea</taxon>
        <taxon>Muridae</taxon>
        <taxon>Murinae</taxon>
        <taxon>Mus</taxon>
        <taxon>Mus</taxon>
    </lineage>
</organism>
<sequence length="227" mass="26332">MFGQGRLGQAMALLLFLGMTAALARGCLQCDPNFAEKFSFYRHHVNLKSWWVGDIPVSGMLLSDWIQNTMKELHLAIPAEITRKKLYQVAEAVYQRMDQLYQGKMYFPGYFPNELRAIFREQVRLIQNAIIESRIDCQRHCGIYQYETISCSNCTDSHVICFGYYCKSSAQWESAVQGLLKYINTWHKQDEKMRTTPAFLSQNIKCLEPQHLVNLTLEKVSECLTQH</sequence>
<comment type="subcellular location">
    <subcellularLocation>
        <location evidence="3">Secreted</location>
    </subcellularLocation>
</comment>
<comment type="alternative products">
    <event type="alternative splicing"/>
    <isoform>
        <id>D3Z690-1</id>
        <name>1</name>
        <sequence type="displayed"/>
    </isoform>
    <isoform>
        <id>D3Z690-2</id>
        <name>2</name>
        <sequence type="described" ref="VSP_042504 VSP_042505"/>
    </isoform>
</comment>
<comment type="miscellaneous">
    <text>Izumo is the name of a Japanese shrine to marriage.</text>
</comment>
<comment type="similarity">
    <text evidence="3">Belongs to the Izumo family.</text>
</comment>
<dbReference type="EMBL" id="AC152410">
    <property type="status" value="NOT_ANNOTATED_CDS"/>
    <property type="molecule type" value="Genomic_DNA"/>
</dbReference>
<dbReference type="EMBL" id="CH466553">
    <property type="protein sequence ID" value="EDL31509.1"/>
    <property type="molecule type" value="Genomic_DNA"/>
</dbReference>
<dbReference type="EMBL" id="BC057953">
    <property type="protein sequence ID" value="AAH57953.1"/>
    <property type="molecule type" value="mRNA"/>
</dbReference>
<dbReference type="CCDS" id="CCDS35983.1">
    <molecule id="D3Z690-1"/>
</dbReference>
<dbReference type="RefSeq" id="NP_082105.3">
    <molecule id="D3Z690-1"/>
    <property type="nucleotide sequence ID" value="NM_027829.3"/>
</dbReference>
<dbReference type="FunCoup" id="D3Z690">
    <property type="interactions" value="82"/>
</dbReference>
<dbReference type="STRING" id="10090.ENSMUSP00000151397"/>
<dbReference type="GlyCosmos" id="D3Z690">
    <property type="glycosylation" value="2 sites, No reported glycans"/>
</dbReference>
<dbReference type="GlyGen" id="D3Z690">
    <property type="glycosylation" value="2 sites, 1 N-linked glycan (1 site)"/>
</dbReference>
<dbReference type="PhosphoSitePlus" id="D3Z690"/>
<dbReference type="SwissPalm" id="D3Z690"/>
<dbReference type="PaxDb" id="10090-ENSMUSP00000093076"/>
<dbReference type="ProteomicsDB" id="269232">
    <molecule id="D3Z690-1"/>
</dbReference>
<dbReference type="ProteomicsDB" id="269233">
    <molecule id="D3Z690-2"/>
</dbReference>
<dbReference type="Antibodypedia" id="57175">
    <property type="antibodies" value="53 antibodies from 16 providers"/>
</dbReference>
<dbReference type="DNASU" id="71564"/>
<dbReference type="Ensembl" id="ENSMUST00000218184.2">
    <molecule id="D3Z690-1"/>
    <property type="protein sequence ID" value="ENSMUSP00000151397.2"/>
    <property type="gene ID" value="ENSMUSG00000055862.8"/>
</dbReference>
<dbReference type="GeneID" id="71564"/>
<dbReference type="KEGG" id="mmu:71564"/>
<dbReference type="UCSC" id="uc007gej.1">
    <molecule id="D3Z690-1"/>
    <property type="organism name" value="mouse"/>
</dbReference>
<dbReference type="AGR" id="MGI:1918814"/>
<dbReference type="CTD" id="113177"/>
<dbReference type="MGI" id="MGI:1918814">
    <property type="gene designation" value="Izumo4"/>
</dbReference>
<dbReference type="VEuPathDB" id="HostDB:ENSMUSG00000055862"/>
<dbReference type="eggNOG" id="ENOG502SNMJ">
    <property type="taxonomic scope" value="Eukaryota"/>
</dbReference>
<dbReference type="GeneTree" id="ENSGT00390000015418"/>
<dbReference type="HOGENOM" id="CLU_110285_0_0_1"/>
<dbReference type="InParanoid" id="D3Z690"/>
<dbReference type="OMA" id="LHCHNNF"/>
<dbReference type="OrthoDB" id="9904630at2759"/>
<dbReference type="PhylomeDB" id="D3Z690"/>
<dbReference type="TreeFam" id="TF338561"/>
<dbReference type="Reactome" id="R-MMU-1300645">
    <property type="pathway name" value="Acrosome Reaction and Sperm:Oocyte Membrane Binding"/>
</dbReference>
<dbReference type="BioGRID-ORCS" id="71564">
    <property type="hits" value="2 hits in 78 CRISPR screens"/>
</dbReference>
<dbReference type="PRO" id="PR:D3Z690"/>
<dbReference type="Proteomes" id="UP000000589">
    <property type="component" value="Chromosome 10"/>
</dbReference>
<dbReference type="RNAct" id="D3Z690">
    <property type="molecule type" value="protein"/>
</dbReference>
<dbReference type="Bgee" id="ENSMUSG00000055862">
    <property type="expression patterns" value="Expressed in spermatid and 179 other cell types or tissues"/>
</dbReference>
<dbReference type="ExpressionAtlas" id="D3Z690">
    <property type="expression patterns" value="baseline and differential"/>
</dbReference>
<dbReference type="GO" id="GO:0005576">
    <property type="term" value="C:extracellular region"/>
    <property type="evidence" value="ECO:0007669"/>
    <property type="project" value="UniProtKB-SubCell"/>
</dbReference>
<dbReference type="InterPro" id="IPR029389">
    <property type="entry name" value="IZUMO"/>
</dbReference>
<dbReference type="InterPro" id="IPR052868">
    <property type="entry name" value="Izumo_fusion"/>
</dbReference>
<dbReference type="PANTHER" id="PTHR37357">
    <property type="entry name" value="IZUMO SPERM-EGG FUSION PROTEIN 4"/>
    <property type="match status" value="1"/>
</dbReference>
<dbReference type="PANTHER" id="PTHR37357:SF1">
    <property type="entry name" value="IZUMO SPERM-EGG FUSION PROTEIN 4"/>
    <property type="match status" value="1"/>
</dbReference>
<dbReference type="Pfam" id="PF15005">
    <property type="entry name" value="IZUMO"/>
    <property type="match status" value="1"/>
</dbReference>
<proteinExistence type="evidence at protein level"/>